<keyword id="KW-1167">Clathrin- and caveolin-independent endocytosis of virus by host</keyword>
<keyword id="KW-1165">Clathrin-mediated endocytosis of virus by host</keyword>
<keyword id="KW-1015">Disulfide bond</keyword>
<keyword id="KW-1170">Fusion of virus membrane with host endosomal membrane</keyword>
<keyword id="KW-1168">Fusion of virus membrane with host membrane</keyword>
<keyword id="KW-0325">Glycoprotein</keyword>
<keyword id="KW-0348">Hemagglutinin</keyword>
<keyword id="KW-1032">Host cell membrane</keyword>
<keyword id="KW-1043">Host membrane</keyword>
<keyword id="KW-0945">Host-virus interaction</keyword>
<keyword id="KW-0449">Lipoprotein</keyword>
<keyword id="KW-0472">Membrane</keyword>
<keyword id="KW-0564">Palmitate</keyword>
<keyword id="KW-0732">Signal</keyword>
<keyword id="KW-0812">Transmembrane</keyword>
<keyword id="KW-1133">Transmembrane helix</keyword>
<keyword id="KW-1161">Viral attachment to host cell</keyword>
<keyword id="KW-0261">Viral envelope protein</keyword>
<keyword id="KW-1162">Viral penetration into host cytoplasm</keyword>
<keyword id="KW-0946">Virion</keyword>
<keyword id="KW-1164">Virus endocytosis by host</keyword>
<keyword id="KW-1160">Virus entry into host cell</keyword>
<reference key="1">
    <citation type="journal article" date="2004" name="Nature">
        <title>Genesis of a highly pathogenic and potentially pandemic H5N1 influenza virus in eastern Asia.</title>
        <authorList>
            <person name="Li K.S."/>
            <person name="Guan Y."/>
            <person name="Wang J."/>
            <person name="Smith G.J.D."/>
            <person name="Xu K.M."/>
            <person name="Duan L."/>
            <person name="Rahardjo A.P."/>
            <person name="Puthavathana P."/>
            <person name="Buranathai C."/>
            <person name="Nguyen T.D."/>
            <person name="Estoepangestie A.T.S."/>
            <person name="Chaisingh A."/>
            <person name="Auewarakul P."/>
            <person name="Long H.T."/>
            <person name="Hanh N.T.H."/>
            <person name="Webby R.J."/>
            <person name="Poon L.L.M."/>
            <person name="Chen H."/>
            <person name="Shortridge K.F."/>
            <person name="Yuen K.Y."/>
            <person name="Webster R.G."/>
            <person name="Peiris J.S.M."/>
        </authorList>
    </citation>
    <scope>NUCLEOTIDE SEQUENCE [GENOMIC RNA]</scope>
</reference>
<name>HEMA_I02A2</name>
<organism>
    <name type="scientific">Influenza A virus (strain A/Chicken/Hong Kong/31.2/2002 H5N1 genotype X1)</name>
    <dbReference type="NCBI Taxonomy" id="284169"/>
    <lineage>
        <taxon>Viruses</taxon>
        <taxon>Riboviria</taxon>
        <taxon>Orthornavirae</taxon>
        <taxon>Negarnaviricota</taxon>
        <taxon>Polyploviricotina</taxon>
        <taxon>Insthoviricetes</taxon>
        <taxon>Articulavirales</taxon>
        <taxon>Orthomyxoviridae</taxon>
        <taxon>Alphainfluenzavirus</taxon>
        <taxon>Alphainfluenzavirus influenzae</taxon>
        <taxon>Influenza A virus</taxon>
    </lineage>
</organism>
<protein>
    <recommendedName>
        <fullName evidence="1">Hemagglutinin</fullName>
    </recommendedName>
    <component>
        <recommendedName>
            <fullName evidence="1">Hemagglutinin HA1 chain</fullName>
        </recommendedName>
    </component>
    <component>
        <recommendedName>
            <fullName evidence="1">Hemagglutinin HA2 chain</fullName>
        </recommendedName>
    </component>
</protein>
<organismHost>
    <name type="scientific">Aves</name>
    <dbReference type="NCBI Taxonomy" id="8782"/>
</organismHost>
<organismHost>
    <name type="scientific">Felis catus</name>
    <name type="common">Cat</name>
    <name type="synonym">Felis silvestris catus</name>
    <dbReference type="NCBI Taxonomy" id="9685"/>
</organismHost>
<organismHost>
    <name type="scientific">Homo sapiens</name>
    <name type="common">Human</name>
    <dbReference type="NCBI Taxonomy" id="9606"/>
</organismHost>
<organismHost>
    <name type="scientific">Panthera pardus</name>
    <name type="common">Leopard</name>
    <name type="synonym">Felis pardus</name>
    <dbReference type="NCBI Taxonomy" id="9691"/>
</organismHost>
<organismHost>
    <name type="scientific">Panthera tigris</name>
    <name type="common">Tiger</name>
    <dbReference type="NCBI Taxonomy" id="9694"/>
</organismHost>
<organismHost>
    <name type="scientific">Sus scrofa</name>
    <name type="common">Pig</name>
    <dbReference type="NCBI Taxonomy" id="9823"/>
</organismHost>
<evidence type="ECO:0000255" key="1">
    <source>
        <dbReference type="HAMAP-Rule" id="MF_04072"/>
    </source>
</evidence>
<accession>Q6DQ21</accession>
<sequence length="567" mass="64134">MEKIVLLLAIVSLVKSDQICIGYHANNSTEQVDTIMEKNVTVTHAQDILEKTHNGKLSDLDGVKPLILRDCSVAGWLLGNPMCDEFINVPEWSYIVEKANPANDLCYPGDFNDYEELKHLLSRINHFEKIQIIPKSSWSNHEASSGVSSACPYNGKSSFFRNVVWLIKKDSAYPTIKRSYNNTNQEDLLILWGIHHPNDAAEQTKLYQNPTTYISVGTSTLNQRLVPKIATRSKVNGQSGRMEFFWTILKPNDAINFESNGNFIAPEYAYKIVKKGDSAIMKSELEYGNCNTKCQTPMGAINSSMPFHNIHPLTIGECPKYVKSNRLVLATGLRNTPQRERRRKKRGLFGAIAGFIEGGWQGMVDGWYGYHHSNEQGSGYAADKESTQKAIDGVTNKVNSIINKMNTQFEAVGREFNNLERRIENLNKKMEDGFLDVWTYNAELLVLMENERTLDFHDSNVKNLYDKVRLQLRDNAKELGNGCFEFYHKCDNECMESVKNGTYDYPQYSEEARLNREEISGVKLESMGTYQILSIYSTVASSLALAIMVAGLSLWMCSNGSLQCRIC</sequence>
<dbReference type="EMBL" id="AY651346">
    <property type="protein sequence ID" value="AAT73286.1"/>
    <property type="molecule type" value="Genomic_RNA"/>
</dbReference>
<dbReference type="SMR" id="Q6DQ21"/>
<dbReference type="GlyCosmos" id="Q6DQ21">
    <property type="glycosylation" value="6 sites, No reported glycans"/>
</dbReference>
<dbReference type="GO" id="GO:0020002">
    <property type="term" value="C:host cell plasma membrane"/>
    <property type="evidence" value="ECO:0007669"/>
    <property type="project" value="UniProtKB-SubCell"/>
</dbReference>
<dbReference type="GO" id="GO:0016020">
    <property type="term" value="C:membrane"/>
    <property type="evidence" value="ECO:0007669"/>
    <property type="project" value="UniProtKB-KW"/>
</dbReference>
<dbReference type="GO" id="GO:0019031">
    <property type="term" value="C:viral envelope"/>
    <property type="evidence" value="ECO:0007669"/>
    <property type="project" value="UniProtKB-KW"/>
</dbReference>
<dbReference type="GO" id="GO:0055036">
    <property type="term" value="C:virion membrane"/>
    <property type="evidence" value="ECO:0007669"/>
    <property type="project" value="UniProtKB-SubCell"/>
</dbReference>
<dbReference type="GO" id="GO:0046789">
    <property type="term" value="F:host cell surface receptor binding"/>
    <property type="evidence" value="ECO:0007669"/>
    <property type="project" value="InterPro"/>
</dbReference>
<dbReference type="GO" id="GO:0075512">
    <property type="term" value="P:clathrin-dependent endocytosis of virus by host cell"/>
    <property type="evidence" value="ECO:0007669"/>
    <property type="project" value="UniProtKB-KW"/>
</dbReference>
<dbReference type="GO" id="GO:0039654">
    <property type="term" value="P:fusion of virus membrane with host endosome membrane"/>
    <property type="evidence" value="ECO:0007669"/>
    <property type="project" value="UniProtKB-KW"/>
</dbReference>
<dbReference type="GO" id="GO:0019064">
    <property type="term" value="P:fusion of virus membrane with host plasma membrane"/>
    <property type="evidence" value="ECO:0007669"/>
    <property type="project" value="InterPro"/>
</dbReference>
<dbReference type="GO" id="GO:0019062">
    <property type="term" value="P:virion attachment to host cell"/>
    <property type="evidence" value="ECO:0007669"/>
    <property type="project" value="UniProtKB-KW"/>
</dbReference>
<dbReference type="FunFam" id="3.90.209.20:FF:000001">
    <property type="entry name" value="Hemagglutinin"/>
    <property type="match status" value="1"/>
</dbReference>
<dbReference type="Gene3D" id="3.90.20.10">
    <property type="match status" value="1"/>
</dbReference>
<dbReference type="Gene3D" id="3.90.209.20">
    <property type="match status" value="1"/>
</dbReference>
<dbReference type="Gene3D" id="2.10.77.10">
    <property type="entry name" value="Hemagglutinin Chain A, Domain 2"/>
    <property type="match status" value="1"/>
</dbReference>
<dbReference type="HAMAP" id="MF_04072">
    <property type="entry name" value="INFV_HEMA"/>
    <property type="match status" value="1"/>
</dbReference>
<dbReference type="InterPro" id="IPR008980">
    <property type="entry name" value="Capsid_hemagglutn"/>
</dbReference>
<dbReference type="InterPro" id="IPR013828">
    <property type="entry name" value="Hemagglutn_HA1_a/b_dom_sf"/>
</dbReference>
<dbReference type="InterPro" id="IPR000149">
    <property type="entry name" value="Hemagglutn_influenz_A"/>
</dbReference>
<dbReference type="InterPro" id="IPR001364">
    <property type="entry name" value="Hemagglutn_influenz_A/B"/>
</dbReference>
<dbReference type="Pfam" id="PF00509">
    <property type="entry name" value="Hemagglutinin"/>
    <property type="match status" value="1"/>
</dbReference>
<dbReference type="PRINTS" id="PR00330">
    <property type="entry name" value="HEMAGGLUTN1"/>
</dbReference>
<dbReference type="PRINTS" id="PR00329">
    <property type="entry name" value="HEMAGGLUTN12"/>
</dbReference>
<dbReference type="SUPFAM" id="SSF58064">
    <property type="entry name" value="Influenza hemagglutinin (stalk)"/>
    <property type="match status" value="1"/>
</dbReference>
<dbReference type="SUPFAM" id="SSF49818">
    <property type="entry name" value="Viral protein domain"/>
    <property type="match status" value="1"/>
</dbReference>
<gene>
    <name evidence="1" type="primary">HA</name>
</gene>
<proteinExistence type="inferred from homology"/>
<feature type="signal peptide" evidence="1">
    <location>
        <begin position="1"/>
        <end position="16"/>
    </location>
</feature>
<feature type="chain" id="PRO_0000440811" description="Hemagglutinin" evidence="1">
    <location>
        <begin position="17"/>
        <end position="567"/>
    </location>
</feature>
<feature type="chain" id="PRO_0000440812" description="Hemagglutinin HA1 chain" evidence="1">
    <location>
        <begin position="17"/>
        <end position="346"/>
    </location>
</feature>
<feature type="chain" id="PRO_0000440813" description="Hemagglutinin HA2 chain" evidence="1">
    <location>
        <begin position="347"/>
        <end position="567"/>
    </location>
</feature>
<feature type="topological domain" description="Extracellular" evidence="1">
    <location>
        <begin position="17"/>
        <end position="531"/>
    </location>
</feature>
<feature type="transmembrane region" description="Helical" evidence="1">
    <location>
        <begin position="532"/>
        <end position="552"/>
    </location>
</feature>
<feature type="topological domain" description="Cytoplasmic" evidence="1">
    <location>
        <begin position="553"/>
        <end position="567"/>
    </location>
</feature>
<feature type="site" description="Cleavage; by host" evidence="1">
    <location>
        <begin position="346"/>
        <end position="347"/>
    </location>
</feature>
<feature type="lipid moiety-binding region" description="S-palmitoyl cysteine; by host" evidence="1">
    <location>
        <position position="557"/>
    </location>
</feature>
<feature type="lipid moiety-binding region" description="S-palmitoyl cysteine; by host" evidence="1">
    <location>
        <position position="564"/>
    </location>
</feature>
<feature type="lipid moiety-binding region" description="S-palmitoyl cysteine; by host" evidence="1">
    <location>
        <position position="567"/>
    </location>
</feature>
<feature type="glycosylation site" description="N-linked (GlcNAc...) asparagine; by host" evidence="1">
    <location>
        <position position="26"/>
    </location>
</feature>
<feature type="glycosylation site" description="N-linked (GlcNAc...) asparagine; by host" evidence="1">
    <location>
        <position position="27"/>
    </location>
</feature>
<feature type="glycosylation site" description="N-linked (GlcNAc...) asparagine; by host" evidence="1">
    <location>
        <position position="39"/>
    </location>
</feature>
<feature type="glycosylation site" description="N-linked (GlcNAc...) asparagine; by host" evidence="1">
    <location>
        <position position="181"/>
    </location>
</feature>
<feature type="glycosylation site" description="N-linked (GlcNAc...) asparagine; by host" evidence="1">
    <location>
        <position position="302"/>
    </location>
</feature>
<feature type="glycosylation site" description="N-linked (GlcNAc...) asparagine; by host" evidence="1">
    <location>
        <position position="500"/>
    </location>
</feature>
<feature type="disulfide bond" description="Interchain (between HA1 and HA2 chains)" evidence="1">
    <location>
        <begin position="20"/>
        <end position="483"/>
    </location>
</feature>
<feature type="disulfide bond" evidence="1">
    <location>
        <begin position="71"/>
        <end position="83"/>
    </location>
</feature>
<feature type="disulfide bond" evidence="1">
    <location>
        <begin position="106"/>
        <end position="151"/>
    </location>
</feature>
<feature type="disulfide bond" evidence="1">
    <location>
        <begin position="294"/>
        <end position="318"/>
    </location>
</feature>
<feature type="disulfide bond" evidence="1">
    <location>
        <begin position="490"/>
        <end position="494"/>
    </location>
</feature>
<feature type="non-terminal residue">
    <location>
        <position position="567"/>
    </location>
</feature>
<comment type="function">
    <text evidence="1">Binds to sialic acid-containing receptors on the cell surface, bringing about the attachment of the virus particle to the cell. This attachment induces virion internalization either through clathrin-dependent endocytosis or through clathrin- and caveolin-independent pathway. Plays a major role in the determination of host range restriction and virulence. Class I viral fusion protein. Responsible for penetration of the virus into the cell cytoplasm by mediating the fusion of the membrane of the endocytosed virus particle with the endosomal membrane. Low pH in endosomes induces an irreversible conformational change in HA2, releasing the fusion hydrophobic peptide. Several trimers are required to form a competent fusion pore.</text>
</comment>
<comment type="subunit">
    <text evidence="1">Homotrimer of disulfide-linked HA1-HA2.</text>
</comment>
<comment type="subcellular location">
    <subcellularLocation>
        <location evidence="1">Virion membrane</location>
        <topology evidence="1">Single-pass type I membrane protein</topology>
    </subcellularLocation>
    <subcellularLocation>
        <location evidence="1">Host apical cell membrane</location>
        <topology evidence="1">Single-pass type I membrane protein</topology>
    </subcellularLocation>
    <text evidence="1">Targeted to the apical plasma membrane in epithelial polarized cells through a signal present in the transmembrane domain. Associated with glycosphingolipid- and cholesterol-enriched detergent-resistant lipid rafts.</text>
</comment>
<comment type="PTM">
    <text evidence="1">Palmitoylated.</text>
</comment>
<comment type="PTM">
    <text evidence="1">In natural infection, inactive HA is matured into HA1 and HA2 outside the cell by one or more trypsin-like, arginine-specific endoprotease secreted by the bronchial epithelial cells. One identified protease that may be involved in this process is secreted in lungs by club cells.</text>
</comment>
<comment type="miscellaneous">
    <text>Major glycoprotein, comprises over 80% of the envelope proteins present in virus particle.</text>
</comment>
<comment type="miscellaneous">
    <text>The extent of infection into host organism is determined by HA. Influenza viruses bud from the apical surface of polarized epithelial cells (e.g. bronchial epithelial cells) into lumen of lungs and are therefore usually pneumotropic. The reason is that HA is cleaved by tryptase clara which is restricted to lungs. However, HAs of H5 and H7 pantropic avian viruses subtypes can be cleaved by furin and subtilisin-type enzymes, allowing the virus to grow in other organs than lungs.</text>
</comment>
<comment type="miscellaneous">
    <text>The influenza A genome consist of 8 RNA segments. Genetic variation of hemagglutinin and/or neuraminidase genes results in the emergence of new influenza strains. The mechanism of variation can be the result of point mutations or the result of genetic reassortment between segments of two different strains.</text>
</comment>
<comment type="similarity">
    <text evidence="1">Belongs to the influenza viruses hemagglutinin family.</text>
</comment>